<accession>Q53608</accession>
<reference key="1">
    <citation type="journal article" date="1994" name="Gene">
        <title>Organization and sequence of the SalI restriction-modification system.</title>
        <authorList>
            <person name="Rodicio M.R."/>
            <person name="Quinton-Jager T."/>
            <person name="Moran L.S."/>
            <person name="Slatko B.E."/>
            <person name="Wilson G.G."/>
        </authorList>
    </citation>
    <scope>NUCLEOTIDE SEQUENCE [GENOMIC DNA]</scope>
</reference>
<reference key="2">
    <citation type="journal article" date="2003" name="Nucleic Acids Res.">
        <title>A nomenclature for restriction enzymes, DNA methyltransferases, homing endonucleases and their genes.</title>
        <authorList>
            <person name="Roberts R.J."/>
            <person name="Belfort M."/>
            <person name="Bestor T."/>
            <person name="Bhagwat A.S."/>
            <person name="Bickle T.A."/>
            <person name="Bitinaite J."/>
            <person name="Blumenthal R.M."/>
            <person name="Degtyarev S.K."/>
            <person name="Dryden D.T."/>
            <person name="Dybvig K."/>
            <person name="Firman K."/>
            <person name="Gromova E.S."/>
            <person name="Gumport R.I."/>
            <person name="Halford S.E."/>
            <person name="Hattman S."/>
            <person name="Heitman J."/>
            <person name="Hornby D.P."/>
            <person name="Janulaitis A."/>
            <person name="Jeltsch A."/>
            <person name="Josephsen J."/>
            <person name="Kiss A."/>
            <person name="Klaenhammer T.R."/>
            <person name="Kobayashi I."/>
            <person name="Kong H."/>
            <person name="Krueger D.H."/>
            <person name="Lacks S."/>
            <person name="Marinus M.G."/>
            <person name="Miyahara M."/>
            <person name="Morgan R.D."/>
            <person name="Murray N.E."/>
            <person name="Nagaraja V."/>
            <person name="Piekarowicz A."/>
            <person name="Pingoud A."/>
            <person name="Raleigh E."/>
            <person name="Rao D.N."/>
            <person name="Reich N."/>
            <person name="Repin V.E."/>
            <person name="Selker E.U."/>
            <person name="Shaw P.C."/>
            <person name="Stein D.C."/>
            <person name="Stoddard B.L."/>
            <person name="Szybalski W."/>
            <person name="Trautner T.A."/>
            <person name="Van Etten J.L."/>
            <person name="Vitor J.M."/>
            <person name="Wilson G.G."/>
            <person name="Xu S.Y."/>
        </authorList>
    </citation>
    <scope>NOMENCLATURE</scope>
    <scope>SUBTYPE</scope>
</reference>
<gene>
    <name evidence="2" type="primary">salIR</name>
</gene>
<evidence type="ECO:0000303" key="1">
    <source>
    </source>
</evidence>
<evidence type="ECO:0000303" key="2">
    <source>
    </source>
</evidence>
<feature type="chain" id="PRO_0000077365" description="Type II restriction enzyme SalI">
    <location>
        <begin position="1"/>
        <end position="315"/>
    </location>
</feature>
<keyword id="KW-0255">Endonuclease</keyword>
<keyword id="KW-0378">Hydrolase</keyword>
<keyword id="KW-0540">Nuclease</keyword>
<keyword id="KW-0680">Restriction system</keyword>
<dbReference type="EC" id="3.1.21.4"/>
<dbReference type="EMBL" id="U01232">
    <property type="protein sequence ID" value="AAA81886.1"/>
    <property type="molecule type" value="Genomic_DNA"/>
</dbReference>
<dbReference type="REBASE" id="1588">
    <property type="entry name" value="SalI"/>
</dbReference>
<dbReference type="PRO" id="PR:Q53608"/>
<dbReference type="GO" id="GO:0003677">
    <property type="term" value="F:DNA binding"/>
    <property type="evidence" value="ECO:0007669"/>
    <property type="project" value="InterPro"/>
</dbReference>
<dbReference type="GO" id="GO:0009036">
    <property type="term" value="F:type II site-specific deoxyribonuclease activity"/>
    <property type="evidence" value="ECO:0007669"/>
    <property type="project" value="UniProtKB-EC"/>
</dbReference>
<dbReference type="GO" id="GO:0009307">
    <property type="term" value="P:DNA restriction-modification system"/>
    <property type="evidence" value="ECO:0007669"/>
    <property type="project" value="UniProtKB-KW"/>
</dbReference>
<dbReference type="InterPro" id="IPR019072">
    <property type="entry name" value="Restrct_endonuc_II_XamI"/>
</dbReference>
<dbReference type="Pfam" id="PF09572">
    <property type="entry name" value="RE_XamI"/>
    <property type="match status" value="1"/>
</dbReference>
<proteinExistence type="predicted"/>
<name>T2S1_STRAL</name>
<comment type="function">
    <text evidence="1">A P subtype restriction enzyme that recognizes the double-stranded sequence 5'-GTCGAC-3' and cleaves after G-1.</text>
</comment>
<comment type="catalytic activity">
    <reaction>
        <text>Endonucleolytic cleavage of DNA to give specific double-stranded fragments with terminal 5'-phosphates.</text>
        <dbReference type="EC" id="3.1.21.4"/>
    </reaction>
</comment>
<protein>
    <recommendedName>
        <fullName evidence="1">Type II restriction enzyme SalI</fullName>
        <shortName evidence="2">R.SalI</shortName>
        <ecNumber>3.1.21.4</ecNumber>
    </recommendedName>
    <alternativeName>
        <fullName>Endonuclease SalI</fullName>
    </alternativeName>
    <alternativeName>
        <fullName>Type-2 restriction enzyme SalI</fullName>
    </alternativeName>
</protein>
<organism>
    <name type="scientific">Streptomyces albus G</name>
    <dbReference type="NCBI Taxonomy" id="1962"/>
    <lineage>
        <taxon>Bacteria</taxon>
        <taxon>Bacillati</taxon>
        <taxon>Actinomycetota</taxon>
        <taxon>Actinomycetes</taxon>
        <taxon>Kitasatosporales</taxon>
        <taxon>Streptomycetaceae</taxon>
        <taxon>Streptomyces</taxon>
    </lineage>
</organism>
<sequence length="315" mass="35337">MINADKPHRWNDDVQASVRLYNQWFLDAAPKAYRDTRQLTIDEVEQAFQRTANMTSITPEVLKAHPKTLATLRMSTAPPIARDRLVGLSHGSKSLLDTMEKGKLPPRMKGDVLDTHLAKMCAVLTDLLDLDLFHWYPTGEPAEPRQRELAATVVADRLCGAIADPIVRNAQERRQLALIEEWLLARGYTKKTHSASLPLNTMQPGTFSFRQNVVVGSDLPVNIPVDAVIQPHTPHSHKLPILIEAKSAGDFTNTNKRRKEEATKIHQLQLKYGNEISLTLFLCGYFNTGYLGYSAAEGLDWVWEHRIDDLEAAGA</sequence>